<protein>
    <recommendedName>
        <fullName>Next to BRCA1 gene 1 protein</fullName>
    </recommendedName>
    <alternativeName>
        <fullName>Neighbor of BRCA1 gene 1 protein</fullName>
    </alternativeName>
</protein>
<reference key="1">
    <citation type="submission" date="2004-11" db="EMBL/GenBank/DDBJ databases">
        <authorList>
            <consortium name="The German cDNA consortium"/>
        </authorList>
    </citation>
    <scope>NUCLEOTIDE SEQUENCE [LARGE SCALE MRNA]</scope>
    <source>
        <tissue>Brain cortex</tissue>
    </source>
</reference>
<name>NBR1_PONAB</name>
<keyword id="KW-0963">Cytoplasm</keyword>
<keyword id="KW-0968">Cytoplasmic vesicle</keyword>
<keyword id="KW-0458">Lysosome</keyword>
<keyword id="KW-0479">Metal-binding</keyword>
<keyword id="KW-0597">Phosphoprotein</keyword>
<keyword id="KW-1185">Reference proteome</keyword>
<keyword id="KW-0832">Ubl conjugation</keyword>
<keyword id="KW-0862">Zinc</keyword>
<keyword id="KW-0863">Zinc-finger</keyword>
<sequence>MEPQVTLNVTFKNEIQSFLVSDPENTTWADIEAMVKVSFDLNTIQIKYLDEENEEVSINSQGEYEEALKMAVKQGNQLQMQVHEGHHVVDEAPPPVVGAKRLAARAGKKPLAHYSSLVRVLGSDMKTPEDSAVQSFPLATCDTDQPQDKPPDWFTSYLETFREQVVKETVEKLEQKLHEKLVLQNPSLGSCPSEVSMPTSEETLFLPENQFSWHIACNNCQRRIVGVRYQCSLCPSYNICEDCEAGPYGHDTNHVLLKLRRPVVGSSEPFCHSKYSTPRLPAALEQVRLPLQPCTPVMPTLSAAFVDENLPDGTHLQPGTKFIKHWRMKNTGNVKWSADTKLKFMWGNLTLASTEKKDVLVPCLKAGHVGVVSVEFIAPALEGTYTSHWRLSHKGQQFGPRVWCSIIVDPFPSEESPDNIEKGMISSSKTDDLTCQQEETFLLAKEERQLGEVTEQTEGTAACIPQKAKNVASERELYIPSVDLLTAQDLLSFELLDINIVQELERVPHNTPVDMTPCMSPLPHDSPLIEKPGLGQIQEENEGAGFKALPDSMVSVKRKAENIASVEEAEEDLSGTQFVCETVIRSLTLDAAPDHNPPCRQKSLQMKFALPEEGPLGNEREEIVHIAEEEAVMEEEEDEEEEDELKDEVQSQSSASSEDYIIILPECFDTSRPLGDSMYSSALSQPGLERGAEGEPGVEAGQEPAEAGERLPGGENQPQEHSISDIFTTSQTLETVPLIPEVVELPPPLPRSSPCVHHHGSPGVDLPVTIPEVSSVPDQIRGEPRGSSGLVNSRQKSYDHSRHHHGSSIAGGLVKGALSVAASAYKALFAGPPVTAQPIVSEDQTAALMAHLFEMGFCDRQLNLQLLKKHNYNILQVVTELLQLNNNDWYSQRY</sequence>
<dbReference type="EMBL" id="CR858386">
    <property type="protein sequence ID" value="CAH90613.1"/>
    <property type="molecule type" value="mRNA"/>
</dbReference>
<dbReference type="RefSeq" id="NP_001127309.1">
    <property type="nucleotide sequence ID" value="NM_001133837.1"/>
</dbReference>
<dbReference type="BMRB" id="Q5RC94"/>
<dbReference type="SMR" id="Q5RC94"/>
<dbReference type="STRING" id="9601.ENSPPYP00000009400"/>
<dbReference type="Ensembl" id="ENSPPYT00000057934.1">
    <property type="protein sequence ID" value="ENSPPYP00000043413.1"/>
    <property type="gene ID" value="ENSPPYG00000008362.3"/>
</dbReference>
<dbReference type="GeneID" id="100174370"/>
<dbReference type="KEGG" id="pon:100174370"/>
<dbReference type="CTD" id="4077"/>
<dbReference type="eggNOG" id="KOG4351">
    <property type="taxonomic scope" value="Eukaryota"/>
</dbReference>
<dbReference type="eggNOG" id="KOG4582">
    <property type="taxonomic scope" value="Eukaryota"/>
</dbReference>
<dbReference type="GeneTree" id="ENSGT00390000016335"/>
<dbReference type="InParanoid" id="Q5RC94"/>
<dbReference type="OrthoDB" id="661148at2759"/>
<dbReference type="Proteomes" id="UP000001595">
    <property type="component" value="Chromosome 17"/>
</dbReference>
<dbReference type="GO" id="GO:0005776">
    <property type="term" value="C:autophagosome"/>
    <property type="evidence" value="ECO:0007669"/>
    <property type="project" value="UniProtKB-SubCell"/>
</dbReference>
<dbReference type="GO" id="GO:0005829">
    <property type="term" value="C:cytosol"/>
    <property type="evidence" value="ECO:0000250"/>
    <property type="project" value="UniProtKB"/>
</dbReference>
<dbReference type="GO" id="GO:0005770">
    <property type="term" value="C:late endosome"/>
    <property type="evidence" value="ECO:0000250"/>
    <property type="project" value="UniProtKB"/>
</dbReference>
<dbReference type="GO" id="GO:0005764">
    <property type="term" value="C:lysosome"/>
    <property type="evidence" value="ECO:0007669"/>
    <property type="project" value="UniProtKB-SubCell"/>
</dbReference>
<dbReference type="GO" id="GO:0031430">
    <property type="term" value="C:M band"/>
    <property type="evidence" value="ECO:0007669"/>
    <property type="project" value="UniProtKB-SubCell"/>
</dbReference>
<dbReference type="GO" id="GO:0000407">
    <property type="term" value="C:phagophore assembly site"/>
    <property type="evidence" value="ECO:0007669"/>
    <property type="project" value="TreeGrafter"/>
</dbReference>
<dbReference type="GO" id="GO:0043235">
    <property type="term" value="C:receptor complex"/>
    <property type="evidence" value="ECO:0000250"/>
    <property type="project" value="UniProtKB"/>
</dbReference>
<dbReference type="GO" id="GO:0043130">
    <property type="term" value="F:ubiquitin binding"/>
    <property type="evidence" value="ECO:0000250"/>
    <property type="project" value="UniProtKB"/>
</dbReference>
<dbReference type="GO" id="GO:0008270">
    <property type="term" value="F:zinc ion binding"/>
    <property type="evidence" value="ECO:0007669"/>
    <property type="project" value="UniProtKB-KW"/>
</dbReference>
<dbReference type="GO" id="GO:0016236">
    <property type="term" value="P:macroautophagy"/>
    <property type="evidence" value="ECO:0000250"/>
    <property type="project" value="UniProtKB"/>
</dbReference>
<dbReference type="CDD" id="cd14947">
    <property type="entry name" value="NBR1_like"/>
    <property type="match status" value="1"/>
</dbReference>
<dbReference type="CDD" id="cd06396">
    <property type="entry name" value="PB1_NBR1"/>
    <property type="match status" value="1"/>
</dbReference>
<dbReference type="CDD" id="cd14319">
    <property type="entry name" value="UBA_NBR1"/>
    <property type="match status" value="1"/>
</dbReference>
<dbReference type="CDD" id="cd02340">
    <property type="entry name" value="ZZ_NBR1_like"/>
    <property type="match status" value="1"/>
</dbReference>
<dbReference type="FunFam" id="1.10.8.10:FF:000033">
    <property type="entry name" value="Next to BRCA1 gene 1 protein"/>
    <property type="match status" value="1"/>
</dbReference>
<dbReference type="FunFam" id="3.10.20.90:FF:000291">
    <property type="entry name" value="Next to BRCA1 gene 1 protein"/>
    <property type="match status" value="1"/>
</dbReference>
<dbReference type="FunFam" id="3.30.60.90:FF:000007">
    <property type="entry name" value="Next to BRCA1 gene 1 protein"/>
    <property type="match status" value="1"/>
</dbReference>
<dbReference type="FunFam" id="2.60.40.10:FF:000199">
    <property type="entry name" value="next to BRCA1 gene 1 protein-like"/>
    <property type="match status" value="1"/>
</dbReference>
<dbReference type="Gene3D" id="3.30.60.90">
    <property type="match status" value="1"/>
</dbReference>
<dbReference type="Gene3D" id="1.10.8.10">
    <property type="entry name" value="DNA helicase RuvA subunit, C-terminal domain"/>
    <property type="match status" value="1"/>
</dbReference>
<dbReference type="Gene3D" id="2.60.40.10">
    <property type="entry name" value="Immunoglobulins"/>
    <property type="match status" value="1"/>
</dbReference>
<dbReference type="Gene3D" id="3.10.20.90">
    <property type="entry name" value="Phosphatidylinositol 3-kinase Catalytic Subunit, Chain A, domain 1"/>
    <property type="match status" value="1"/>
</dbReference>
<dbReference type="InterPro" id="IPR013783">
    <property type="entry name" value="Ig-like_fold"/>
</dbReference>
<dbReference type="InterPro" id="IPR032350">
    <property type="entry name" value="N_BRCA1_central"/>
</dbReference>
<dbReference type="InterPro" id="IPR053793">
    <property type="entry name" value="PB1-like"/>
</dbReference>
<dbReference type="InterPro" id="IPR000270">
    <property type="entry name" value="PB1_dom"/>
</dbReference>
<dbReference type="InterPro" id="IPR034852">
    <property type="entry name" value="PB1_NBR1"/>
</dbReference>
<dbReference type="InterPro" id="IPR015940">
    <property type="entry name" value="UBA"/>
</dbReference>
<dbReference type="InterPro" id="IPR009060">
    <property type="entry name" value="UBA-like_sf"/>
</dbReference>
<dbReference type="InterPro" id="IPR056893">
    <property type="entry name" value="UBA_NBR1_C"/>
</dbReference>
<dbReference type="InterPro" id="IPR000433">
    <property type="entry name" value="Znf_ZZ"/>
</dbReference>
<dbReference type="InterPro" id="IPR043145">
    <property type="entry name" value="Znf_ZZ_sf"/>
</dbReference>
<dbReference type="PANTHER" id="PTHR20930:SF2">
    <property type="entry name" value="NEXT TO BRCA1 GENE 1 PROTEIN"/>
    <property type="match status" value="1"/>
</dbReference>
<dbReference type="PANTHER" id="PTHR20930">
    <property type="entry name" value="OVARIAN CARCINOMA ANTIGEN CA125-RELATED"/>
    <property type="match status" value="1"/>
</dbReference>
<dbReference type="Pfam" id="PF16158">
    <property type="entry name" value="N_BRCA1_IG"/>
    <property type="match status" value="1"/>
</dbReference>
<dbReference type="Pfam" id="PF00564">
    <property type="entry name" value="PB1"/>
    <property type="match status" value="1"/>
</dbReference>
<dbReference type="Pfam" id="PF24932">
    <property type="entry name" value="UBA_NBR1_C"/>
    <property type="match status" value="1"/>
</dbReference>
<dbReference type="Pfam" id="PF00569">
    <property type="entry name" value="ZZ"/>
    <property type="match status" value="1"/>
</dbReference>
<dbReference type="SMART" id="SM00666">
    <property type="entry name" value="PB1"/>
    <property type="match status" value="1"/>
</dbReference>
<dbReference type="SMART" id="SM00291">
    <property type="entry name" value="ZnF_ZZ"/>
    <property type="match status" value="1"/>
</dbReference>
<dbReference type="SUPFAM" id="SSF54277">
    <property type="entry name" value="CAD &amp; PB1 domains"/>
    <property type="match status" value="1"/>
</dbReference>
<dbReference type="SUPFAM" id="SSF57850">
    <property type="entry name" value="RING/U-box"/>
    <property type="match status" value="1"/>
</dbReference>
<dbReference type="SUPFAM" id="SSF46934">
    <property type="entry name" value="UBA-like"/>
    <property type="match status" value="1"/>
</dbReference>
<dbReference type="PROSITE" id="PS51745">
    <property type="entry name" value="PB1"/>
    <property type="match status" value="1"/>
</dbReference>
<dbReference type="PROSITE" id="PS50030">
    <property type="entry name" value="UBA"/>
    <property type="match status" value="1"/>
</dbReference>
<dbReference type="PROSITE" id="PS01357">
    <property type="entry name" value="ZF_ZZ_1"/>
    <property type="match status" value="1"/>
</dbReference>
<dbReference type="PROSITE" id="PS50135">
    <property type="entry name" value="ZF_ZZ_2"/>
    <property type="match status" value="1"/>
</dbReference>
<proteinExistence type="evidence at transcript level"/>
<organism>
    <name type="scientific">Pongo abelii</name>
    <name type="common">Sumatran orangutan</name>
    <name type="synonym">Pongo pygmaeus abelii</name>
    <dbReference type="NCBI Taxonomy" id="9601"/>
    <lineage>
        <taxon>Eukaryota</taxon>
        <taxon>Metazoa</taxon>
        <taxon>Chordata</taxon>
        <taxon>Craniata</taxon>
        <taxon>Vertebrata</taxon>
        <taxon>Euteleostomi</taxon>
        <taxon>Mammalia</taxon>
        <taxon>Eutheria</taxon>
        <taxon>Euarchontoglires</taxon>
        <taxon>Primates</taxon>
        <taxon>Haplorrhini</taxon>
        <taxon>Catarrhini</taxon>
        <taxon>Hominidae</taxon>
        <taxon>Pongo</taxon>
    </lineage>
</organism>
<evidence type="ECO:0000250" key="1"/>
<evidence type="ECO:0000250" key="2">
    <source>
        <dbReference type="UniProtKB" id="Q14596"/>
    </source>
</evidence>
<evidence type="ECO:0000250" key="3">
    <source>
        <dbReference type="UniProtKB" id="Q501R9"/>
    </source>
</evidence>
<evidence type="ECO:0000255" key="4">
    <source>
        <dbReference type="PROSITE-ProRule" id="PRU00212"/>
    </source>
</evidence>
<evidence type="ECO:0000255" key="5">
    <source>
        <dbReference type="PROSITE-ProRule" id="PRU00228"/>
    </source>
</evidence>
<evidence type="ECO:0000255" key="6">
    <source>
        <dbReference type="PROSITE-ProRule" id="PRU01081"/>
    </source>
</evidence>
<evidence type="ECO:0000256" key="7">
    <source>
        <dbReference type="SAM" id="MobiDB-lite"/>
    </source>
</evidence>
<gene>
    <name type="primary">NBR1</name>
</gene>
<accession>Q5RC94</accession>
<feature type="chain" id="PRO_0000096748" description="Next to BRCA1 gene 1 protein">
    <location>
        <begin position="1"/>
        <end position="894"/>
    </location>
</feature>
<feature type="domain" description="PB1" evidence="6">
    <location>
        <begin position="4"/>
        <end position="85"/>
    </location>
</feature>
<feature type="domain" description="UBA" evidence="4">
    <location>
        <begin position="841"/>
        <end position="885"/>
    </location>
</feature>
<feature type="zinc finger region" description="ZZ-type" evidence="5">
    <location>
        <begin position="212"/>
        <end position="264"/>
    </location>
</feature>
<feature type="region of interest" description="ATG8 family proteins-binding" evidence="1">
    <location>
        <begin position="472"/>
        <end position="566"/>
    </location>
</feature>
<feature type="region of interest" description="Disordered" evidence="7">
    <location>
        <begin position="630"/>
        <end position="656"/>
    </location>
</feature>
<feature type="region of interest" description="ATG8 family proteins-binding" evidence="1">
    <location>
        <begin position="655"/>
        <end position="666"/>
    </location>
</feature>
<feature type="region of interest" description="Disordered" evidence="7">
    <location>
        <begin position="678"/>
        <end position="721"/>
    </location>
</feature>
<feature type="region of interest" description="Disordered" evidence="7">
    <location>
        <begin position="776"/>
        <end position="807"/>
    </location>
</feature>
<feature type="compositionally biased region" description="Acidic residues" evidence="7">
    <location>
        <begin position="630"/>
        <end position="646"/>
    </location>
</feature>
<feature type="binding site" evidence="5">
    <location>
        <position position="217"/>
    </location>
    <ligand>
        <name>Zn(2+)</name>
        <dbReference type="ChEBI" id="CHEBI:29105"/>
        <label>1</label>
    </ligand>
</feature>
<feature type="binding site" evidence="5">
    <location>
        <position position="220"/>
    </location>
    <ligand>
        <name>Zn(2+)</name>
        <dbReference type="ChEBI" id="CHEBI:29105"/>
        <label>1</label>
    </ligand>
</feature>
<feature type="binding site" evidence="5">
    <location>
        <position position="231"/>
    </location>
    <ligand>
        <name>Zn(2+)</name>
        <dbReference type="ChEBI" id="CHEBI:29105"/>
        <label>2</label>
    </ligand>
</feature>
<feature type="binding site" evidence="5">
    <location>
        <position position="234"/>
    </location>
    <ligand>
        <name>Zn(2+)</name>
        <dbReference type="ChEBI" id="CHEBI:29105"/>
        <label>2</label>
    </ligand>
</feature>
<feature type="binding site" evidence="5">
    <location>
        <position position="240"/>
    </location>
    <ligand>
        <name>Zn(2+)</name>
        <dbReference type="ChEBI" id="CHEBI:29105"/>
        <label>1</label>
    </ligand>
</feature>
<feature type="binding site" evidence="5">
    <location>
        <position position="243"/>
    </location>
    <ligand>
        <name>Zn(2+)</name>
        <dbReference type="ChEBI" id="CHEBI:29105"/>
        <label>1</label>
    </ligand>
</feature>
<feature type="binding site" evidence="5">
    <location>
        <position position="250"/>
    </location>
    <ligand>
        <name>Zn(2+)</name>
        <dbReference type="ChEBI" id="CHEBI:29105"/>
        <label>2</label>
    </ligand>
</feature>
<feature type="binding site" evidence="5">
    <location>
        <position position="254"/>
    </location>
    <ligand>
        <name>Zn(2+)</name>
        <dbReference type="ChEBI" id="CHEBI:29105"/>
        <label>2</label>
    </ligand>
</feature>
<feature type="modified residue" description="Phosphoserine" evidence="2">
    <location>
        <position position="116"/>
    </location>
</feature>
<feature type="modified residue" description="Phosphothreonine" evidence="2">
    <location>
        <position position="516"/>
    </location>
</feature>
<feature type="modified residue" description="Phosphoserine" evidence="3">
    <location>
        <position position="520"/>
    </location>
</feature>
<feature type="modified residue" description="Phosphoserine" evidence="3">
    <location>
        <position position="526"/>
    </location>
</feature>
<feature type="modified residue" description="Phosphoserine" evidence="2">
    <location>
        <position position="555"/>
    </location>
</feature>
<comment type="function">
    <text evidence="1">Acts probably as a receptor for selective autophagosomal degradation of ubiquitinated targets.</text>
</comment>
<comment type="subunit">
    <text evidence="2">Homooligomer and heterooligomer. Interacts with SQSTM1, titin/TTN, TRIM55, RNF29, USP8, SQSTM1, MAP1LC3A, MAP1LC3B, MAP1LC3C, GABARAP, GABARAPL1 and GABARAPL2. Binds to ubiquitin and ubiquitinated proteins. Interacts with TAX1BP1 (By similarity).</text>
</comment>
<comment type="subcellular location">
    <subcellularLocation>
        <location evidence="2">Cytoplasm</location>
    </subcellularLocation>
    <subcellularLocation>
        <location evidence="2">Cytoplasmic vesicle</location>
        <location evidence="2">Autophagosome</location>
    </subcellularLocation>
    <subcellularLocation>
        <location evidence="2">Lysosome</location>
    </subcellularLocation>
    <subcellularLocation>
        <location evidence="3">Cytoplasm</location>
        <location evidence="3">Myofibril</location>
        <location evidence="3">Sarcomere</location>
        <location evidence="3">M line</location>
    </subcellularLocation>
    <text evidence="2 3">In cardiac muscles localizes to the sarcomeric M line (By similarity). Is targeted to lysosomes for degradation (By similarity).</text>
</comment>
<comment type="domain">
    <text evidence="1">The PB1 domain mediates interaction with SQSTM1.</text>
</comment>
<comment type="PTM">
    <text evidence="2">Phosphorylated by GSK3A; this phosphorylation inhibits NBR1 involvement in the formation of ubiquitinated protein aggregates.</text>
</comment>